<feature type="chain" id="PRO_0000163108" description="Molybdopterin synthase catalytic subunit">
    <location>
        <begin position="1"/>
        <end position="151"/>
    </location>
</feature>
<feature type="binding site" evidence="1">
    <location>
        <begin position="38"/>
        <end position="40"/>
    </location>
    <ligand>
        <name>substrate</name>
    </ligand>
</feature>
<feature type="binding site" evidence="1">
    <location>
        <begin position="104"/>
        <end position="105"/>
    </location>
    <ligand>
        <name>substrate</name>
    </ligand>
</feature>
<feature type="binding site" evidence="1">
    <location>
        <position position="120"/>
    </location>
    <ligand>
        <name>substrate</name>
    </ligand>
</feature>
<feature type="binding site" evidence="1">
    <location>
        <begin position="127"/>
        <end position="129"/>
    </location>
    <ligand>
        <name>substrate</name>
    </ligand>
</feature>
<evidence type="ECO:0000250" key="1"/>
<evidence type="ECO:0000305" key="2"/>
<protein>
    <recommendedName>
        <fullName>Molybdopterin synthase catalytic subunit</fullName>
        <ecNumber>2.8.1.12</ecNumber>
    </recommendedName>
    <alternativeName>
        <fullName>MPT synthase subunit 2</fullName>
    </alternativeName>
    <alternativeName>
        <fullName>Molybdenum cofactor biosynthesis protein E</fullName>
    </alternativeName>
    <alternativeName>
        <fullName>Molybdopterin-converting factor large subunit</fullName>
    </alternativeName>
    <alternativeName>
        <fullName>Molybdopterin-converting factor subunit 2</fullName>
    </alternativeName>
</protein>
<dbReference type="EC" id="2.8.1.12"/>
<dbReference type="EMBL" id="AL590842">
    <property type="protein sequence ID" value="CAL19826.1"/>
    <property type="molecule type" value="Genomic_DNA"/>
</dbReference>
<dbReference type="EMBL" id="AE009952">
    <property type="protein sequence ID" value="AAM86570.1"/>
    <property type="status" value="ALT_INIT"/>
    <property type="molecule type" value="Genomic_DNA"/>
</dbReference>
<dbReference type="EMBL" id="AE017042">
    <property type="protein sequence ID" value="AAS61248.1"/>
    <property type="status" value="ALT_INIT"/>
    <property type="molecule type" value="Genomic_DNA"/>
</dbReference>
<dbReference type="PIR" id="AH0142">
    <property type="entry name" value="AH0142"/>
</dbReference>
<dbReference type="RefSeq" id="YP_002346201.1">
    <property type="nucleotide sequence ID" value="NC_003143.1"/>
</dbReference>
<dbReference type="SMR" id="Q8ZGW2"/>
<dbReference type="STRING" id="214092.YPO1162"/>
<dbReference type="PaxDb" id="214092-YPO1162"/>
<dbReference type="DNASU" id="1147966"/>
<dbReference type="EnsemblBacteria" id="AAS61248">
    <property type="protein sequence ID" value="AAS61248"/>
    <property type="gene ID" value="YP_0997"/>
</dbReference>
<dbReference type="KEGG" id="ype:YPO1162"/>
<dbReference type="KEGG" id="ypk:y3019"/>
<dbReference type="KEGG" id="ypm:YP_0997"/>
<dbReference type="PATRIC" id="fig|214092.21.peg.1459"/>
<dbReference type="eggNOG" id="COG0314">
    <property type="taxonomic scope" value="Bacteria"/>
</dbReference>
<dbReference type="HOGENOM" id="CLU_089568_2_1_6"/>
<dbReference type="OMA" id="GEICLFV"/>
<dbReference type="OrthoDB" id="9803224at2"/>
<dbReference type="UniPathway" id="UPA00344"/>
<dbReference type="Proteomes" id="UP000000815">
    <property type="component" value="Chromosome"/>
</dbReference>
<dbReference type="Proteomes" id="UP000001019">
    <property type="component" value="Chromosome"/>
</dbReference>
<dbReference type="Proteomes" id="UP000002490">
    <property type="component" value="Chromosome"/>
</dbReference>
<dbReference type="GO" id="GO:0005829">
    <property type="term" value="C:cytosol"/>
    <property type="evidence" value="ECO:0000318"/>
    <property type="project" value="GO_Central"/>
</dbReference>
<dbReference type="GO" id="GO:0030366">
    <property type="term" value="F:molybdopterin synthase activity"/>
    <property type="evidence" value="ECO:0007669"/>
    <property type="project" value="UniProtKB-EC"/>
</dbReference>
<dbReference type="GO" id="GO:0006777">
    <property type="term" value="P:Mo-molybdopterin cofactor biosynthetic process"/>
    <property type="evidence" value="ECO:0007669"/>
    <property type="project" value="UniProtKB-KW"/>
</dbReference>
<dbReference type="CDD" id="cd00756">
    <property type="entry name" value="MoaE"/>
    <property type="match status" value="1"/>
</dbReference>
<dbReference type="FunFam" id="3.90.1170.40:FF:000001">
    <property type="entry name" value="Molybdopterin synthase catalytic subunit MoaE"/>
    <property type="match status" value="1"/>
</dbReference>
<dbReference type="Gene3D" id="3.90.1170.40">
    <property type="entry name" value="Molybdopterin biosynthesis MoaE subunit"/>
    <property type="match status" value="1"/>
</dbReference>
<dbReference type="InterPro" id="IPR036563">
    <property type="entry name" value="MoaE_sf"/>
</dbReference>
<dbReference type="InterPro" id="IPR003448">
    <property type="entry name" value="Mopterin_biosynth_MoaE"/>
</dbReference>
<dbReference type="NCBIfam" id="NF007959">
    <property type="entry name" value="PRK10678.1"/>
    <property type="match status" value="1"/>
</dbReference>
<dbReference type="PANTHER" id="PTHR23404">
    <property type="entry name" value="MOLYBDOPTERIN SYNTHASE RELATED"/>
    <property type="match status" value="1"/>
</dbReference>
<dbReference type="Pfam" id="PF02391">
    <property type="entry name" value="MoaE"/>
    <property type="match status" value="1"/>
</dbReference>
<dbReference type="SUPFAM" id="SSF54690">
    <property type="entry name" value="Molybdopterin synthase subunit MoaE"/>
    <property type="match status" value="1"/>
</dbReference>
<accession>Q8ZGW2</accession>
<accession>Q0WHN7</accession>
<proteinExistence type="inferred from homology"/>
<reference key="1">
    <citation type="journal article" date="2001" name="Nature">
        <title>Genome sequence of Yersinia pestis, the causative agent of plague.</title>
        <authorList>
            <person name="Parkhill J."/>
            <person name="Wren B.W."/>
            <person name="Thomson N.R."/>
            <person name="Titball R.W."/>
            <person name="Holden M.T.G."/>
            <person name="Prentice M.B."/>
            <person name="Sebaihia M."/>
            <person name="James K.D."/>
            <person name="Churcher C.M."/>
            <person name="Mungall K.L."/>
            <person name="Baker S."/>
            <person name="Basham D."/>
            <person name="Bentley S.D."/>
            <person name="Brooks K."/>
            <person name="Cerdeno-Tarraga A.-M."/>
            <person name="Chillingworth T."/>
            <person name="Cronin A."/>
            <person name="Davies R.M."/>
            <person name="Davis P."/>
            <person name="Dougan G."/>
            <person name="Feltwell T."/>
            <person name="Hamlin N."/>
            <person name="Holroyd S."/>
            <person name="Jagels K."/>
            <person name="Karlyshev A.V."/>
            <person name="Leather S."/>
            <person name="Moule S."/>
            <person name="Oyston P.C.F."/>
            <person name="Quail M.A."/>
            <person name="Rutherford K.M."/>
            <person name="Simmonds M."/>
            <person name="Skelton J."/>
            <person name="Stevens K."/>
            <person name="Whitehead S."/>
            <person name="Barrell B.G."/>
        </authorList>
    </citation>
    <scope>NUCLEOTIDE SEQUENCE [LARGE SCALE GENOMIC DNA]</scope>
    <source>
        <strain>CO-92 / Biovar Orientalis</strain>
    </source>
</reference>
<reference key="2">
    <citation type="journal article" date="2002" name="J. Bacteriol.">
        <title>Genome sequence of Yersinia pestis KIM.</title>
        <authorList>
            <person name="Deng W."/>
            <person name="Burland V."/>
            <person name="Plunkett G. III"/>
            <person name="Boutin A."/>
            <person name="Mayhew G.F."/>
            <person name="Liss P."/>
            <person name="Perna N.T."/>
            <person name="Rose D.J."/>
            <person name="Mau B."/>
            <person name="Zhou S."/>
            <person name="Schwartz D.C."/>
            <person name="Fetherston J.D."/>
            <person name="Lindler L.E."/>
            <person name="Brubaker R.R."/>
            <person name="Plano G.V."/>
            <person name="Straley S.C."/>
            <person name="McDonough K.A."/>
            <person name="Nilles M.L."/>
            <person name="Matson J.S."/>
            <person name="Blattner F.R."/>
            <person name="Perry R.D."/>
        </authorList>
    </citation>
    <scope>NUCLEOTIDE SEQUENCE [LARGE SCALE GENOMIC DNA]</scope>
    <source>
        <strain>KIM10+ / Biovar Mediaevalis</strain>
    </source>
</reference>
<reference key="3">
    <citation type="journal article" date="2004" name="DNA Res.">
        <title>Complete genome sequence of Yersinia pestis strain 91001, an isolate avirulent to humans.</title>
        <authorList>
            <person name="Song Y."/>
            <person name="Tong Z."/>
            <person name="Wang J."/>
            <person name="Wang L."/>
            <person name="Guo Z."/>
            <person name="Han Y."/>
            <person name="Zhang J."/>
            <person name="Pei D."/>
            <person name="Zhou D."/>
            <person name="Qin H."/>
            <person name="Pang X."/>
            <person name="Han Y."/>
            <person name="Zhai J."/>
            <person name="Li M."/>
            <person name="Cui B."/>
            <person name="Qi Z."/>
            <person name="Jin L."/>
            <person name="Dai R."/>
            <person name="Chen F."/>
            <person name="Li S."/>
            <person name="Ye C."/>
            <person name="Du Z."/>
            <person name="Lin W."/>
            <person name="Wang J."/>
            <person name="Yu J."/>
            <person name="Yang H."/>
            <person name="Wang J."/>
            <person name="Huang P."/>
            <person name="Yang R."/>
        </authorList>
    </citation>
    <scope>NUCLEOTIDE SEQUENCE [LARGE SCALE GENOMIC DNA]</scope>
    <source>
        <strain>91001 / Biovar Mediaevalis</strain>
    </source>
</reference>
<organism>
    <name type="scientific">Yersinia pestis</name>
    <dbReference type="NCBI Taxonomy" id="632"/>
    <lineage>
        <taxon>Bacteria</taxon>
        <taxon>Pseudomonadati</taxon>
        <taxon>Pseudomonadota</taxon>
        <taxon>Gammaproteobacteria</taxon>
        <taxon>Enterobacterales</taxon>
        <taxon>Yersiniaceae</taxon>
        <taxon>Yersinia</taxon>
    </lineage>
</organism>
<keyword id="KW-0501">Molybdenum cofactor biosynthesis</keyword>
<keyword id="KW-1185">Reference proteome</keyword>
<keyword id="KW-0808">Transferase</keyword>
<sequence>MMENTRIRVGAEAFSVGDEYTWLSQCDEDGAVVTFTGKVRNHNLGASVSALTLEHYPGMTEKALTEIIADARSRWSLQRVSVIHRVGPLFPGDEIVFVGVTSAHRSMAFEAAEFIMDYLKTRAPFWKREATVEGERWVESRDSDHIAAKRW</sequence>
<name>MOAE_YERPE</name>
<gene>
    <name type="primary">moaE</name>
    <name type="ordered locus">YPO1162</name>
    <name type="ordered locus">y3019</name>
    <name type="ordered locus">YP_0997</name>
</gene>
<comment type="function">
    <text evidence="1">Converts molybdopterin precursor Z into molybdopterin. This requires the incorporation of two sulfur atoms into precursor Z to generate a dithiolene group. The sulfur is provided by MoaD (By similarity).</text>
</comment>
<comment type="catalytic activity">
    <reaction>
        <text>2 [molybdopterin-synthase sulfur-carrier protein]-C-terminal-Gly-aminoethanethioate + cyclic pyranopterin phosphate + H2O = molybdopterin + 2 [molybdopterin-synthase sulfur-carrier protein]-C-terminal Gly-Gly + 2 H(+)</text>
        <dbReference type="Rhea" id="RHEA:26333"/>
        <dbReference type="Rhea" id="RHEA-COMP:12202"/>
        <dbReference type="Rhea" id="RHEA-COMP:19907"/>
        <dbReference type="ChEBI" id="CHEBI:15377"/>
        <dbReference type="ChEBI" id="CHEBI:15378"/>
        <dbReference type="ChEBI" id="CHEBI:58698"/>
        <dbReference type="ChEBI" id="CHEBI:59648"/>
        <dbReference type="ChEBI" id="CHEBI:90778"/>
        <dbReference type="ChEBI" id="CHEBI:232372"/>
        <dbReference type="EC" id="2.8.1.12"/>
    </reaction>
</comment>
<comment type="pathway">
    <text>Cofactor biosynthesis; molybdopterin biosynthesis.</text>
</comment>
<comment type="subunit">
    <text evidence="1">Heterotetramer of 2 MoaD subunits and 2 MoaE subunits. Also stable as homodimer. The enzyme changes between these two forms during catalysis (By similarity).</text>
</comment>
<comment type="similarity">
    <text evidence="2">Belongs to the MoaE family.</text>
</comment>
<comment type="sequence caution" evidence="2">
    <conflict type="erroneous initiation">
        <sequence resource="EMBL-CDS" id="AAM86570"/>
    </conflict>
</comment>
<comment type="sequence caution" evidence="2">
    <conflict type="erroneous initiation">
        <sequence resource="EMBL-CDS" id="AAS61248"/>
    </conflict>
</comment>